<gene>
    <name type="ordered locus">SPy_1118</name>
    <name type="ordered locus">M5005_Spy0840</name>
</gene>
<name>Y1118_STRP1</name>
<dbReference type="EMBL" id="AE004092">
    <property type="protein sequence ID" value="AAK33993.1"/>
    <property type="molecule type" value="Genomic_DNA"/>
</dbReference>
<dbReference type="EMBL" id="CP000017">
    <property type="protein sequence ID" value="AAZ51458.1"/>
    <property type="molecule type" value="Genomic_DNA"/>
</dbReference>
<dbReference type="RefSeq" id="NP_269272.1">
    <property type="nucleotide sequence ID" value="NC_002737.2"/>
</dbReference>
<dbReference type="SMR" id="P65962"/>
<dbReference type="PaxDb" id="1314-HKU360_00904"/>
<dbReference type="KEGG" id="spy:SPy_1118"/>
<dbReference type="KEGG" id="spz:M5005_Spy0840"/>
<dbReference type="PATRIC" id="fig|160490.10.peg.972"/>
<dbReference type="HOGENOM" id="CLU_073529_0_2_9"/>
<dbReference type="OMA" id="ELMPREK"/>
<dbReference type="Proteomes" id="UP000000750">
    <property type="component" value="Chromosome"/>
</dbReference>
<dbReference type="GO" id="GO:0046872">
    <property type="term" value="F:metal ion binding"/>
    <property type="evidence" value="ECO:0007669"/>
    <property type="project" value="UniProtKB-KW"/>
</dbReference>
<dbReference type="GO" id="GO:0008237">
    <property type="term" value="F:metallopeptidase activity"/>
    <property type="evidence" value="ECO:0007669"/>
    <property type="project" value="UniProtKB-KW"/>
</dbReference>
<dbReference type="GO" id="GO:0006508">
    <property type="term" value="P:proteolysis"/>
    <property type="evidence" value="ECO:0007669"/>
    <property type="project" value="UniProtKB-KW"/>
</dbReference>
<dbReference type="CDD" id="cd08071">
    <property type="entry name" value="MPN_DUF2466"/>
    <property type="match status" value="1"/>
</dbReference>
<dbReference type="Gene3D" id="3.40.140.10">
    <property type="entry name" value="Cytidine Deaminase, domain 2"/>
    <property type="match status" value="1"/>
</dbReference>
<dbReference type="InterPro" id="IPR037518">
    <property type="entry name" value="MPN"/>
</dbReference>
<dbReference type="InterPro" id="IPR025657">
    <property type="entry name" value="RadC_JAB"/>
</dbReference>
<dbReference type="InterPro" id="IPR010994">
    <property type="entry name" value="RuvA_2-like"/>
</dbReference>
<dbReference type="InterPro" id="IPR001405">
    <property type="entry name" value="UPF0758"/>
</dbReference>
<dbReference type="InterPro" id="IPR020891">
    <property type="entry name" value="UPF0758_CS"/>
</dbReference>
<dbReference type="InterPro" id="IPR046778">
    <property type="entry name" value="UPF0758_N"/>
</dbReference>
<dbReference type="NCBIfam" id="NF000642">
    <property type="entry name" value="PRK00024.1"/>
    <property type="match status" value="1"/>
</dbReference>
<dbReference type="NCBIfam" id="TIGR00608">
    <property type="entry name" value="radc"/>
    <property type="match status" value="1"/>
</dbReference>
<dbReference type="PANTHER" id="PTHR30471">
    <property type="entry name" value="DNA REPAIR PROTEIN RADC"/>
    <property type="match status" value="1"/>
</dbReference>
<dbReference type="PANTHER" id="PTHR30471:SF3">
    <property type="entry name" value="UPF0758 PROTEIN YEES-RELATED"/>
    <property type="match status" value="1"/>
</dbReference>
<dbReference type="Pfam" id="PF04002">
    <property type="entry name" value="RadC"/>
    <property type="match status" value="1"/>
</dbReference>
<dbReference type="Pfam" id="PF20582">
    <property type="entry name" value="UPF0758_N"/>
    <property type="match status" value="1"/>
</dbReference>
<dbReference type="SUPFAM" id="SSF47781">
    <property type="entry name" value="RuvA domain 2-like"/>
    <property type="match status" value="1"/>
</dbReference>
<dbReference type="PROSITE" id="PS50249">
    <property type="entry name" value="MPN"/>
    <property type="match status" value="1"/>
</dbReference>
<dbReference type="PROSITE" id="PS01302">
    <property type="entry name" value="UPF0758"/>
    <property type="match status" value="1"/>
</dbReference>
<evidence type="ECO:0000255" key="1">
    <source>
        <dbReference type="PROSITE-ProRule" id="PRU01182"/>
    </source>
</evidence>
<evidence type="ECO:0000305" key="2"/>
<protein>
    <recommendedName>
        <fullName>UPF0758 protein SPy_1118/M5005_Spy0840</fullName>
    </recommendedName>
</protein>
<proteinExistence type="inferred from homology"/>
<accession>P65962</accession>
<accession>Q48YW4</accession>
<accession>Q99ZR5</accession>
<organism>
    <name type="scientific">Streptococcus pyogenes serotype M1</name>
    <dbReference type="NCBI Taxonomy" id="301447"/>
    <lineage>
        <taxon>Bacteria</taxon>
        <taxon>Bacillati</taxon>
        <taxon>Bacillota</taxon>
        <taxon>Bacilli</taxon>
        <taxon>Lactobacillales</taxon>
        <taxon>Streptococcaceae</taxon>
        <taxon>Streptococcus</taxon>
    </lineage>
</organism>
<sequence>MYSIKCDDNKAMPRERLMRLGAESLSNQELLAILLRTGNKEKHVLELSSYLLSHLDSLADFKKMSLQELQHLAGIGKVKAIEIKAMIELVSRILATDKTLTDSVLTSVQVAEKMMAALGDKKQEHLVVLYLDNQNRIIEEKTIFIGTVRRSLAEPREILYYACKNMATSLIVIHNHPSGNIEPSSNDYCFTEKIKRSCEDLGIICLDHIIVSYKDYYSFREKSTLF</sequence>
<feature type="chain" id="PRO_0000190739" description="UPF0758 protein SPy_1118/M5005_Spy0840">
    <location>
        <begin position="1"/>
        <end position="226"/>
    </location>
</feature>
<feature type="domain" description="MPN" evidence="1">
    <location>
        <begin position="103"/>
        <end position="225"/>
    </location>
</feature>
<feature type="short sequence motif" description="JAMM motif" evidence="1">
    <location>
        <begin position="174"/>
        <end position="187"/>
    </location>
</feature>
<feature type="binding site" evidence="1">
    <location>
        <position position="174"/>
    </location>
    <ligand>
        <name>Zn(2+)</name>
        <dbReference type="ChEBI" id="CHEBI:29105"/>
        <note>catalytic</note>
    </ligand>
</feature>
<feature type="binding site" evidence="1">
    <location>
        <position position="176"/>
    </location>
    <ligand>
        <name>Zn(2+)</name>
        <dbReference type="ChEBI" id="CHEBI:29105"/>
        <note>catalytic</note>
    </ligand>
</feature>
<feature type="binding site" evidence="1">
    <location>
        <position position="187"/>
    </location>
    <ligand>
        <name>Zn(2+)</name>
        <dbReference type="ChEBI" id="CHEBI:29105"/>
        <note>catalytic</note>
    </ligand>
</feature>
<reference key="1">
    <citation type="journal article" date="2001" name="Proc. Natl. Acad. Sci. U.S.A.">
        <title>Complete genome sequence of an M1 strain of Streptococcus pyogenes.</title>
        <authorList>
            <person name="Ferretti J.J."/>
            <person name="McShan W.M."/>
            <person name="Ajdic D.J."/>
            <person name="Savic D.J."/>
            <person name="Savic G."/>
            <person name="Lyon K."/>
            <person name="Primeaux C."/>
            <person name="Sezate S."/>
            <person name="Suvorov A.N."/>
            <person name="Kenton S."/>
            <person name="Lai H.S."/>
            <person name="Lin S.P."/>
            <person name="Qian Y."/>
            <person name="Jia H.G."/>
            <person name="Najar F.Z."/>
            <person name="Ren Q."/>
            <person name="Zhu H."/>
            <person name="Song L."/>
            <person name="White J."/>
            <person name="Yuan X."/>
            <person name="Clifton S.W."/>
            <person name="Roe B.A."/>
            <person name="McLaughlin R.E."/>
        </authorList>
    </citation>
    <scope>NUCLEOTIDE SEQUENCE [LARGE SCALE GENOMIC DNA]</scope>
    <source>
        <strain>ATCC 700294 / SF370 / Serotype M1</strain>
    </source>
</reference>
<reference key="2">
    <citation type="journal article" date="2005" name="J. Infect. Dis.">
        <title>Evolutionary origin and emergence of a highly successful clone of serotype M1 group A Streptococcus involved multiple horizontal gene transfer events.</title>
        <authorList>
            <person name="Sumby P."/>
            <person name="Porcella S.F."/>
            <person name="Madrigal A.G."/>
            <person name="Barbian K.D."/>
            <person name="Virtaneva K."/>
            <person name="Ricklefs S.M."/>
            <person name="Sturdevant D.E."/>
            <person name="Graham M.R."/>
            <person name="Vuopio-Varkila J."/>
            <person name="Hoe N.P."/>
            <person name="Musser J.M."/>
        </authorList>
    </citation>
    <scope>NUCLEOTIDE SEQUENCE [LARGE SCALE GENOMIC DNA]</scope>
    <source>
        <strain>ATCC BAA-947 / MGAS5005 / Serotype M1</strain>
    </source>
</reference>
<keyword id="KW-0378">Hydrolase</keyword>
<keyword id="KW-0479">Metal-binding</keyword>
<keyword id="KW-0482">Metalloprotease</keyword>
<keyword id="KW-0645">Protease</keyword>
<keyword id="KW-1185">Reference proteome</keyword>
<keyword id="KW-0862">Zinc</keyword>
<comment type="similarity">
    <text evidence="2">Belongs to the UPF0758 family.</text>
</comment>